<gene>
    <name evidence="1" type="primary">grpE</name>
    <name type="ordered locus">LCK_01092</name>
</gene>
<evidence type="ECO:0000255" key="1">
    <source>
        <dbReference type="HAMAP-Rule" id="MF_01151"/>
    </source>
</evidence>
<evidence type="ECO:0000256" key="2">
    <source>
        <dbReference type="SAM" id="MobiDB-lite"/>
    </source>
</evidence>
<reference key="1">
    <citation type="journal article" date="2008" name="J. Bacteriol.">
        <title>Complete genome sequence of Leuconostoc citreum KM20.</title>
        <authorList>
            <person name="Kim J.F."/>
            <person name="Jeong H."/>
            <person name="Lee J.-S."/>
            <person name="Choi S.-H."/>
            <person name="Ha M."/>
            <person name="Hur C.-G."/>
            <person name="Kim J.-S."/>
            <person name="Lee S."/>
            <person name="Park H.-S."/>
            <person name="Park Y.-H."/>
            <person name="Oh T.K."/>
        </authorList>
    </citation>
    <scope>NUCLEOTIDE SEQUENCE [LARGE SCALE GENOMIC DNA]</scope>
    <source>
        <strain>KM20</strain>
    </source>
</reference>
<feature type="chain" id="PRO_1000137583" description="Protein GrpE">
    <location>
        <begin position="1"/>
        <end position="189"/>
    </location>
</feature>
<feature type="region of interest" description="Disordered" evidence="2">
    <location>
        <begin position="1"/>
        <end position="22"/>
    </location>
</feature>
<feature type="compositionally biased region" description="Acidic residues" evidence="2">
    <location>
        <begin position="10"/>
        <end position="22"/>
    </location>
</feature>
<proteinExistence type="inferred from homology"/>
<sequence>MKEQQKETEQNIEEINDETVTEQIETDVDTLEKEAEVDPQQVEIEQLQSDVKELEDKLLRAQAEIQNIQQRHARELQTVRKYDGQKLAGAVLPAVDNLERALQVESEDAVTQQIKTGVEMTLGTLVQALRDNGISATGEVGETFDPTKHQAIQSVASDDVASDQIATVLQKGYMIQDRVLRPAMVAVAK</sequence>
<keyword id="KW-0143">Chaperone</keyword>
<keyword id="KW-0963">Cytoplasm</keyword>
<keyword id="KW-1185">Reference proteome</keyword>
<keyword id="KW-0346">Stress response</keyword>
<accession>B1MZG7</accession>
<name>GRPE_LEUCK</name>
<comment type="function">
    <text evidence="1">Participates actively in the response to hyperosmotic and heat shock by preventing the aggregation of stress-denatured proteins, in association with DnaK and GrpE. It is the nucleotide exchange factor for DnaK and may function as a thermosensor. Unfolded proteins bind initially to DnaJ; upon interaction with the DnaJ-bound protein, DnaK hydrolyzes its bound ATP, resulting in the formation of a stable complex. GrpE releases ADP from DnaK; ATP binding to DnaK triggers the release of the substrate protein, thus completing the reaction cycle. Several rounds of ATP-dependent interactions between DnaJ, DnaK and GrpE are required for fully efficient folding.</text>
</comment>
<comment type="subunit">
    <text evidence="1">Homodimer.</text>
</comment>
<comment type="subcellular location">
    <subcellularLocation>
        <location evidence="1">Cytoplasm</location>
    </subcellularLocation>
</comment>
<comment type="similarity">
    <text evidence="1">Belongs to the GrpE family.</text>
</comment>
<protein>
    <recommendedName>
        <fullName evidence="1">Protein GrpE</fullName>
    </recommendedName>
    <alternativeName>
        <fullName evidence="1">HSP-70 cofactor</fullName>
    </alternativeName>
</protein>
<organism>
    <name type="scientific">Leuconostoc citreum (strain KM20)</name>
    <dbReference type="NCBI Taxonomy" id="349519"/>
    <lineage>
        <taxon>Bacteria</taxon>
        <taxon>Bacillati</taxon>
        <taxon>Bacillota</taxon>
        <taxon>Bacilli</taxon>
        <taxon>Lactobacillales</taxon>
        <taxon>Lactobacillaceae</taxon>
        <taxon>Leuconostoc</taxon>
    </lineage>
</organism>
<dbReference type="EMBL" id="DQ489736">
    <property type="protein sequence ID" value="ACA82919.1"/>
    <property type="molecule type" value="Genomic_DNA"/>
</dbReference>
<dbReference type="RefSeq" id="WP_004907826.1">
    <property type="nucleotide sequence ID" value="NC_010471.1"/>
</dbReference>
<dbReference type="SMR" id="B1MZG7"/>
<dbReference type="STRING" id="349519.LCK_01092"/>
<dbReference type="KEGG" id="lci:LCK_01092"/>
<dbReference type="eggNOG" id="COG0576">
    <property type="taxonomic scope" value="Bacteria"/>
</dbReference>
<dbReference type="HOGENOM" id="CLU_057217_6_3_9"/>
<dbReference type="OrthoDB" id="9812586at2"/>
<dbReference type="Proteomes" id="UP000002166">
    <property type="component" value="Chromosome"/>
</dbReference>
<dbReference type="GO" id="GO:0005737">
    <property type="term" value="C:cytoplasm"/>
    <property type="evidence" value="ECO:0007669"/>
    <property type="project" value="UniProtKB-SubCell"/>
</dbReference>
<dbReference type="GO" id="GO:0000774">
    <property type="term" value="F:adenyl-nucleotide exchange factor activity"/>
    <property type="evidence" value="ECO:0007669"/>
    <property type="project" value="InterPro"/>
</dbReference>
<dbReference type="GO" id="GO:0042803">
    <property type="term" value="F:protein homodimerization activity"/>
    <property type="evidence" value="ECO:0007669"/>
    <property type="project" value="InterPro"/>
</dbReference>
<dbReference type="GO" id="GO:0051087">
    <property type="term" value="F:protein-folding chaperone binding"/>
    <property type="evidence" value="ECO:0007669"/>
    <property type="project" value="InterPro"/>
</dbReference>
<dbReference type="GO" id="GO:0051082">
    <property type="term" value="F:unfolded protein binding"/>
    <property type="evidence" value="ECO:0007669"/>
    <property type="project" value="TreeGrafter"/>
</dbReference>
<dbReference type="GO" id="GO:0006457">
    <property type="term" value="P:protein folding"/>
    <property type="evidence" value="ECO:0007669"/>
    <property type="project" value="InterPro"/>
</dbReference>
<dbReference type="CDD" id="cd00446">
    <property type="entry name" value="GrpE"/>
    <property type="match status" value="1"/>
</dbReference>
<dbReference type="FunFam" id="2.30.22.10:FF:000001">
    <property type="entry name" value="Protein GrpE"/>
    <property type="match status" value="1"/>
</dbReference>
<dbReference type="Gene3D" id="3.90.20.20">
    <property type="match status" value="1"/>
</dbReference>
<dbReference type="Gene3D" id="2.30.22.10">
    <property type="entry name" value="Head domain of nucleotide exchange factor GrpE"/>
    <property type="match status" value="1"/>
</dbReference>
<dbReference type="HAMAP" id="MF_01151">
    <property type="entry name" value="GrpE"/>
    <property type="match status" value="1"/>
</dbReference>
<dbReference type="InterPro" id="IPR000740">
    <property type="entry name" value="GrpE"/>
</dbReference>
<dbReference type="InterPro" id="IPR013805">
    <property type="entry name" value="GrpE_coiled_coil"/>
</dbReference>
<dbReference type="InterPro" id="IPR009012">
    <property type="entry name" value="GrpE_head"/>
</dbReference>
<dbReference type="NCBIfam" id="NF010738">
    <property type="entry name" value="PRK14140.1"/>
    <property type="match status" value="1"/>
</dbReference>
<dbReference type="NCBIfam" id="NF010748">
    <property type="entry name" value="PRK14150.1"/>
    <property type="match status" value="1"/>
</dbReference>
<dbReference type="NCBIfam" id="NF010759">
    <property type="entry name" value="PRK14162.1"/>
    <property type="match status" value="1"/>
</dbReference>
<dbReference type="PANTHER" id="PTHR21237">
    <property type="entry name" value="GRPE PROTEIN"/>
    <property type="match status" value="1"/>
</dbReference>
<dbReference type="PANTHER" id="PTHR21237:SF23">
    <property type="entry name" value="GRPE PROTEIN HOMOLOG, MITOCHONDRIAL"/>
    <property type="match status" value="1"/>
</dbReference>
<dbReference type="Pfam" id="PF01025">
    <property type="entry name" value="GrpE"/>
    <property type="match status" value="1"/>
</dbReference>
<dbReference type="PRINTS" id="PR00773">
    <property type="entry name" value="GRPEPROTEIN"/>
</dbReference>
<dbReference type="SUPFAM" id="SSF58014">
    <property type="entry name" value="Coiled-coil domain of nucleotide exchange factor GrpE"/>
    <property type="match status" value="1"/>
</dbReference>
<dbReference type="SUPFAM" id="SSF51064">
    <property type="entry name" value="Head domain of nucleotide exchange factor GrpE"/>
    <property type="match status" value="1"/>
</dbReference>
<dbReference type="PROSITE" id="PS01071">
    <property type="entry name" value="GRPE"/>
    <property type="match status" value="1"/>
</dbReference>